<dbReference type="EMBL" id="BC074191">
    <property type="protein sequence ID" value="AAH74191.1"/>
    <property type="molecule type" value="mRNA"/>
</dbReference>
<dbReference type="RefSeq" id="NP_001086102.1">
    <property type="nucleotide sequence ID" value="NM_001092633.1"/>
</dbReference>
<dbReference type="SMR" id="Q6GM84"/>
<dbReference type="DNASU" id="444531"/>
<dbReference type="GeneID" id="444531"/>
<dbReference type="KEGG" id="xla:444531"/>
<dbReference type="AGR" id="Xenbase:XB-GENE-6254889"/>
<dbReference type="CTD" id="444531"/>
<dbReference type="Xenbase" id="XB-GENE-6254889">
    <property type="gene designation" value="gchfr.L"/>
</dbReference>
<dbReference type="OrthoDB" id="64291at2759"/>
<dbReference type="Proteomes" id="UP000186698">
    <property type="component" value="Chromosome 8L"/>
</dbReference>
<dbReference type="Bgee" id="444531">
    <property type="expression patterns" value="Expressed in liver and 19 other cell types or tissues"/>
</dbReference>
<dbReference type="GO" id="GO:0005737">
    <property type="term" value="C:cytoplasm"/>
    <property type="evidence" value="ECO:0000318"/>
    <property type="project" value="GO_Central"/>
</dbReference>
<dbReference type="GO" id="GO:0005829">
    <property type="term" value="C:cytosol"/>
    <property type="evidence" value="ECO:0007669"/>
    <property type="project" value="UniProtKB-SubCell"/>
</dbReference>
<dbReference type="GO" id="GO:0031965">
    <property type="term" value="C:nuclear membrane"/>
    <property type="evidence" value="ECO:0007669"/>
    <property type="project" value="UniProtKB-SubCell"/>
</dbReference>
<dbReference type="GO" id="GO:0005634">
    <property type="term" value="C:nucleus"/>
    <property type="evidence" value="ECO:0000318"/>
    <property type="project" value="GO_Central"/>
</dbReference>
<dbReference type="GO" id="GO:0044549">
    <property type="term" value="F:GTP cyclohydrolase binding"/>
    <property type="evidence" value="ECO:0000318"/>
    <property type="project" value="GO_Central"/>
</dbReference>
<dbReference type="GO" id="GO:0009890">
    <property type="term" value="P:negative regulation of biosynthetic process"/>
    <property type="evidence" value="ECO:0007669"/>
    <property type="project" value="InterPro"/>
</dbReference>
<dbReference type="FunFam" id="3.30.1410.10:FF:000001">
    <property type="entry name" value="GTP cyclohydrolase 1 feedback regulatory protein"/>
    <property type="match status" value="1"/>
</dbReference>
<dbReference type="Gene3D" id="3.30.1410.10">
    <property type="entry name" value="GTP cyclohydrolase I feedback regulatory protein GFRP"/>
    <property type="match status" value="1"/>
</dbReference>
<dbReference type="InterPro" id="IPR036717">
    <property type="entry name" value="GFRP_sf"/>
</dbReference>
<dbReference type="InterPro" id="IPR009112">
    <property type="entry name" value="GTP_CycHdrlase_I_reg"/>
</dbReference>
<dbReference type="PANTHER" id="PTHR16852">
    <property type="entry name" value="GTP CYCLOHYDROLASE 1 FEEDBACK REGULATORY PROTEIN"/>
    <property type="match status" value="1"/>
</dbReference>
<dbReference type="PANTHER" id="PTHR16852:SF2">
    <property type="entry name" value="GTP CYCLOHYDROLASE 1 FEEDBACK REGULATORY PROTEIN"/>
    <property type="match status" value="1"/>
</dbReference>
<dbReference type="Pfam" id="PF06399">
    <property type="entry name" value="GFRP"/>
    <property type="match status" value="1"/>
</dbReference>
<dbReference type="SUPFAM" id="SSF69761">
    <property type="entry name" value="GTP cyclohydrolase I feedback regulatory protein, GFRP"/>
    <property type="match status" value="1"/>
</dbReference>
<reference key="1">
    <citation type="submission" date="2004-06" db="EMBL/GenBank/DDBJ databases">
        <authorList>
            <consortium name="NIH - Xenopus Gene Collection (XGC) project"/>
        </authorList>
    </citation>
    <scope>NUCLEOTIDE SEQUENCE [LARGE SCALE MRNA]</scope>
    <source>
        <tissue>Kidney</tissue>
    </source>
</reference>
<evidence type="ECO:0000250" key="1"/>
<evidence type="ECO:0000305" key="2"/>
<protein>
    <recommendedName>
        <fullName>GTP cyclohydrolase 1 feedback regulatory protein</fullName>
        <shortName>GFRP</shortName>
    </recommendedName>
    <alternativeName>
        <fullName>GTP cyclohydrolase I feedback regulatory protein</fullName>
    </alternativeName>
</protein>
<proteinExistence type="inferred from homology"/>
<gene>
    <name type="primary">gchfr</name>
</gene>
<keyword id="KW-0963">Cytoplasm</keyword>
<keyword id="KW-0472">Membrane</keyword>
<keyword id="KW-0539">Nucleus</keyword>
<keyword id="KW-1185">Reference proteome</keyword>
<feature type="chain" id="PRO_0000189679" description="GTP cyclohydrolase 1 feedback regulatory protein">
    <location>
        <begin position="1"/>
        <end position="84"/>
    </location>
</feature>
<organism>
    <name type="scientific">Xenopus laevis</name>
    <name type="common">African clawed frog</name>
    <dbReference type="NCBI Taxonomy" id="8355"/>
    <lineage>
        <taxon>Eukaryota</taxon>
        <taxon>Metazoa</taxon>
        <taxon>Chordata</taxon>
        <taxon>Craniata</taxon>
        <taxon>Vertebrata</taxon>
        <taxon>Euteleostomi</taxon>
        <taxon>Amphibia</taxon>
        <taxon>Batrachia</taxon>
        <taxon>Anura</taxon>
        <taxon>Pipoidea</taxon>
        <taxon>Pipidae</taxon>
        <taxon>Xenopodinae</taxon>
        <taxon>Xenopus</taxon>
        <taxon>Xenopus</taxon>
    </lineage>
</organism>
<comment type="function">
    <text evidence="1">Mediates tetrahydrobiopterin inhibition of GTP cyclohydrolase 1.</text>
</comment>
<comment type="subunit">
    <text evidence="1">Homopentamer. Forms a complex with GCH1 where a GCH1 homodecamer is sandwiched by two GFRP homopentamers (By similarity).</text>
</comment>
<comment type="subcellular location">
    <subcellularLocation>
        <location evidence="1">Nucleus</location>
    </subcellularLocation>
    <subcellularLocation>
        <location evidence="1">Nucleus membrane</location>
    </subcellularLocation>
    <subcellularLocation>
        <location evidence="1">Cytoplasm</location>
        <location evidence="1">Cytosol</location>
    </subcellularLocation>
</comment>
<comment type="similarity">
    <text evidence="2">Belongs to the GFRP family.</text>
</comment>
<name>GFRP_XENLA</name>
<accession>Q6GM84</accession>
<sequence>MPYVLISTQIRMETGPTIVGDEFSDLVLMAQLEADKRTVLGNNFSEYYVNEPPRVTLNKLERLGYRVVSMTGVGQTLVWCLHKE</sequence>